<proteinExistence type="inferred from homology"/>
<gene>
    <name evidence="1" type="primary">dxr</name>
    <name type="ordered locus">PERMA_0141</name>
</gene>
<feature type="chain" id="PRO_1000124106" description="1-deoxy-D-xylulose 5-phosphate reductoisomerase">
    <location>
        <begin position="1"/>
        <end position="373"/>
    </location>
</feature>
<feature type="binding site" evidence="1">
    <location>
        <position position="10"/>
    </location>
    <ligand>
        <name>NADPH</name>
        <dbReference type="ChEBI" id="CHEBI:57783"/>
    </ligand>
</feature>
<feature type="binding site" evidence="1">
    <location>
        <position position="11"/>
    </location>
    <ligand>
        <name>NADPH</name>
        <dbReference type="ChEBI" id="CHEBI:57783"/>
    </ligand>
</feature>
<feature type="binding site" evidence="1">
    <location>
        <position position="12"/>
    </location>
    <ligand>
        <name>NADPH</name>
        <dbReference type="ChEBI" id="CHEBI:57783"/>
    </ligand>
</feature>
<feature type="binding site" evidence="1">
    <location>
        <position position="13"/>
    </location>
    <ligand>
        <name>NADPH</name>
        <dbReference type="ChEBI" id="CHEBI:57783"/>
    </ligand>
</feature>
<feature type="binding site" evidence="1">
    <location>
        <position position="37"/>
    </location>
    <ligand>
        <name>NADPH</name>
        <dbReference type="ChEBI" id="CHEBI:57783"/>
    </ligand>
</feature>
<feature type="binding site" evidence="1">
    <location>
        <position position="112"/>
    </location>
    <ligand>
        <name>NADPH</name>
        <dbReference type="ChEBI" id="CHEBI:57783"/>
    </ligand>
</feature>
<feature type="binding site" evidence="1">
    <location>
        <position position="113"/>
    </location>
    <ligand>
        <name>1-deoxy-D-xylulose 5-phosphate</name>
        <dbReference type="ChEBI" id="CHEBI:57792"/>
    </ligand>
</feature>
<feature type="binding site" evidence="1">
    <location>
        <position position="114"/>
    </location>
    <ligand>
        <name>NADPH</name>
        <dbReference type="ChEBI" id="CHEBI:57783"/>
    </ligand>
</feature>
<feature type="binding site" evidence="1">
    <location>
        <position position="134"/>
    </location>
    <ligand>
        <name>Mn(2+)</name>
        <dbReference type="ChEBI" id="CHEBI:29035"/>
    </ligand>
</feature>
<feature type="binding site" evidence="1">
    <location>
        <position position="135"/>
    </location>
    <ligand>
        <name>1-deoxy-D-xylulose 5-phosphate</name>
        <dbReference type="ChEBI" id="CHEBI:57792"/>
    </ligand>
</feature>
<feature type="binding site" evidence="1">
    <location>
        <position position="136"/>
    </location>
    <ligand>
        <name>1-deoxy-D-xylulose 5-phosphate</name>
        <dbReference type="ChEBI" id="CHEBI:57792"/>
    </ligand>
</feature>
<feature type="binding site" evidence="1">
    <location>
        <position position="136"/>
    </location>
    <ligand>
        <name>Mn(2+)</name>
        <dbReference type="ChEBI" id="CHEBI:29035"/>
    </ligand>
</feature>
<feature type="binding site" evidence="1">
    <location>
        <position position="160"/>
    </location>
    <ligand>
        <name>1-deoxy-D-xylulose 5-phosphate</name>
        <dbReference type="ChEBI" id="CHEBI:57792"/>
    </ligand>
</feature>
<feature type="binding site" evidence="1">
    <location>
        <position position="183"/>
    </location>
    <ligand>
        <name>1-deoxy-D-xylulose 5-phosphate</name>
        <dbReference type="ChEBI" id="CHEBI:57792"/>
    </ligand>
</feature>
<feature type="binding site" evidence="1">
    <location>
        <position position="189"/>
    </location>
    <ligand>
        <name>NADPH</name>
        <dbReference type="ChEBI" id="CHEBI:57783"/>
    </ligand>
</feature>
<feature type="binding site" evidence="1">
    <location>
        <position position="196"/>
    </location>
    <ligand>
        <name>1-deoxy-D-xylulose 5-phosphate</name>
        <dbReference type="ChEBI" id="CHEBI:57792"/>
    </ligand>
</feature>
<feature type="binding site" evidence="1">
    <location>
        <position position="201"/>
    </location>
    <ligand>
        <name>1-deoxy-D-xylulose 5-phosphate</name>
        <dbReference type="ChEBI" id="CHEBI:57792"/>
    </ligand>
</feature>
<feature type="binding site" evidence="1">
    <location>
        <position position="202"/>
    </location>
    <ligand>
        <name>1-deoxy-D-xylulose 5-phosphate</name>
        <dbReference type="ChEBI" id="CHEBI:57792"/>
    </ligand>
</feature>
<feature type="binding site" evidence="1">
    <location>
        <position position="205"/>
    </location>
    <ligand>
        <name>1-deoxy-D-xylulose 5-phosphate</name>
        <dbReference type="ChEBI" id="CHEBI:57792"/>
    </ligand>
</feature>
<feature type="binding site" evidence="1">
    <location>
        <position position="205"/>
    </location>
    <ligand>
        <name>Mn(2+)</name>
        <dbReference type="ChEBI" id="CHEBI:29035"/>
    </ligand>
</feature>
<sequence>MKRLAVLGSTGSIGTQTLDIVRKYRDRLEVSLLAASRVSEKLLDQIDEFKPEYVYIAEGEKIKGVKTLIGEDGLYKLAQLDIDLFINGISGINGILPTYLLLENNKKLATANKEAIICLGEIYGDKYSDIFPIDSEHSAIFQCLLSGRKEEVEKIILTASGGPFLNLPKEEFRYITPDQALNHPRWKMGKKVSIDSATLMNKGFEIIEAHYLFNIPYSKIDVVIHPESIVHGLVQFIDGSVISHLSPPDMRIPICYAISYPERWEIDVRRLNLAQVKNLTFLEPDYDRFPLLNIAKECGEKGGACPTVLTTADEIAVNLFLEGKITFDMIPVYIQQVLDQADFSKPETFEDIIFIIKETEKIFWNILKLQNVN</sequence>
<comment type="function">
    <text evidence="1">Catalyzes the NADPH-dependent rearrangement and reduction of 1-deoxy-D-xylulose-5-phosphate (DXP) to 2-C-methyl-D-erythritol 4-phosphate (MEP).</text>
</comment>
<comment type="catalytic activity">
    <reaction evidence="1">
        <text>2-C-methyl-D-erythritol 4-phosphate + NADP(+) = 1-deoxy-D-xylulose 5-phosphate + NADPH + H(+)</text>
        <dbReference type="Rhea" id="RHEA:13717"/>
        <dbReference type="ChEBI" id="CHEBI:15378"/>
        <dbReference type="ChEBI" id="CHEBI:57783"/>
        <dbReference type="ChEBI" id="CHEBI:57792"/>
        <dbReference type="ChEBI" id="CHEBI:58262"/>
        <dbReference type="ChEBI" id="CHEBI:58349"/>
        <dbReference type="EC" id="1.1.1.267"/>
    </reaction>
    <physiologicalReaction direction="right-to-left" evidence="1">
        <dbReference type="Rhea" id="RHEA:13719"/>
    </physiologicalReaction>
</comment>
<comment type="cofactor">
    <cofactor evidence="1">
        <name>Mg(2+)</name>
        <dbReference type="ChEBI" id="CHEBI:18420"/>
    </cofactor>
    <cofactor evidence="1">
        <name>Mn(2+)</name>
        <dbReference type="ChEBI" id="CHEBI:29035"/>
    </cofactor>
</comment>
<comment type="pathway">
    <text evidence="1">Isoprenoid biosynthesis; isopentenyl diphosphate biosynthesis via DXP pathway; isopentenyl diphosphate from 1-deoxy-D-xylulose 5-phosphate: step 1/6.</text>
</comment>
<comment type="similarity">
    <text evidence="1">Belongs to the DXR family.</text>
</comment>
<accession>C0QTC4</accession>
<dbReference type="EC" id="1.1.1.267" evidence="1"/>
<dbReference type="EMBL" id="CP001230">
    <property type="protein sequence ID" value="ACO04698.1"/>
    <property type="molecule type" value="Genomic_DNA"/>
</dbReference>
<dbReference type="RefSeq" id="WP_012676935.1">
    <property type="nucleotide sequence ID" value="NC_012440.1"/>
</dbReference>
<dbReference type="SMR" id="C0QTC4"/>
<dbReference type="STRING" id="123214.PERMA_0141"/>
<dbReference type="PaxDb" id="123214-PERMA_0141"/>
<dbReference type="KEGG" id="pmx:PERMA_0141"/>
<dbReference type="eggNOG" id="COG0743">
    <property type="taxonomic scope" value="Bacteria"/>
</dbReference>
<dbReference type="HOGENOM" id="CLU_035714_4_0_0"/>
<dbReference type="OrthoDB" id="9806546at2"/>
<dbReference type="UniPathway" id="UPA00056">
    <property type="reaction ID" value="UER00092"/>
</dbReference>
<dbReference type="Proteomes" id="UP000001366">
    <property type="component" value="Chromosome"/>
</dbReference>
<dbReference type="GO" id="GO:0030604">
    <property type="term" value="F:1-deoxy-D-xylulose-5-phosphate reductoisomerase activity"/>
    <property type="evidence" value="ECO:0007669"/>
    <property type="project" value="UniProtKB-UniRule"/>
</dbReference>
<dbReference type="GO" id="GO:0030145">
    <property type="term" value="F:manganese ion binding"/>
    <property type="evidence" value="ECO:0007669"/>
    <property type="project" value="TreeGrafter"/>
</dbReference>
<dbReference type="GO" id="GO:0070402">
    <property type="term" value="F:NADPH binding"/>
    <property type="evidence" value="ECO:0007669"/>
    <property type="project" value="InterPro"/>
</dbReference>
<dbReference type="GO" id="GO:0051484">
    <property type="term" value="P:isopentenyl diphosphate biosynthetic process, methylerythritol 4-phosphate pathway involved in terpenoid biosynthetic process"/>
    <property type="evidence" value="ECO:0007669"/>
    <property type="project" value="TreeGrafter"/>
</dbReference>
<dbReference type="Gene3D" id="1.10.1740.10">
    <property type="match status" value="1"/>
</dbReference>
<dbReference type="Gene3D" id="3.40.50.720">
    <property type="entry name" value="NAD(P)-binding Rossmann-like Domain"/>
    <property type="match status" value="1"/>
</dbReference>
<dbReference type="HAMAP" id="MF_00183">
    <property type="entry name" value="DXP_reductoisom"/>
    <property type="match status" value="1"/>
</dbReference>
<dbReference type="InterPro" id="IPR003821">
    <property type="entry name" value="DXP_reductoisomerase"/>
</dbReference>
<dbReference type="InterPro" id="IPR013644">
    <property type="entry name" value="DXP_reductoisomerase_C"/>
</dbReference>
<dbReference type="InterPro" id="IPR013512">
    <property type="entry name" value="DXP_reductoisomerase_N"/>
</dbReference>
<dbReference type="InterPro" id="IPR026877">
    <property type="entry name" value="DXPR_C"/>
</dbReference>
<dbReference type="InterPro" id="IPR036169">
    <property type="entry name" value="DXPR_C_sf"/>
</dbReference>
<dbReference type="InterPro" id="IPR036291">
    <property type="entry name" value="NAD(P)-bd_dom_sf"/>
</dbReference>
<dbReference type="NCBIfam" id="TIGR00243">
    <property type="entry name" value="Dxr"/>
    <property type="match status" value="1"/>
</dbReference>
<dbReference type="PANTHER" id="PTHR30525">
    <property type="entry name" value="1-DEOXY-D-XYLULOSE 5-PHOSPHATE REDUCTOISOMERASE"/>
    <property type="match status" value="1"/>
</dbReference>
<dbReference type="PANTHER" id="PTHR30525:SF0">
    <property type="entry name" value="1-DEOXY-D-XYLULOSE 5-PHOSPHATE REDUCTOISOMERASE, CHLOROPLASTIC"/>
    <property type="match status" value="1"/>
</dbReference>
<dbReference type="Pfam" id="PF08436">
    <property type="entry name" value="DXP_redisom_C"/>
    <property type="match status" value="1"/>
</dbReference>
<dbReference type="Pfam" id="PF02670">
    <property type="entry name" value="DXP_reductoisom"/>
    <property type="match status" value="1"/>
</dbReference>
<dbReference type="Pfam" id="PF13288">
    <property type="entry name" value="DXPR_C"/>
    <property type="match status" value="1"/>
</dbReference>
<dbReference type="PIRSF" id="PIRSF006205">
    <property type="entry name" value="Dxp_reductismrs"/>
    <property type="match status" value="1"/>
</dbReference>
<dbReference type="SUPFAM" id="SSF69055">
    <property type="entry name" value="1-deoxy-D-xylulose-5-phosphate reductoisomerase, C-terminal domain"/>
    <property type="match status" value="1"/>
</dbReference>
<dbReference type="SUPFAM" id="SSF55347">
    <property type="entry name" value="Glyceraldehyde-3-phosphate dehydrogenase-like, C-terminal domain"/>
    <property type="match status" value="1"/>
</dbReference>
<dbReference type="SUPFAM" id="SSF51735">
    <property type="entry name" value="NAD(P)-binding Rossmann-fold domains"/>
    <property type="match status" value="1"/>
</dbReference>
<protein>
    <recommendedName>
        <fullName evidence="1">1-deoxy-D-xylulose 5-phosphate reductoisomerase</fullName>
        <shortName evidence="1">DXP reductoisomerase</shortName>
        <ecNumber evidence="1">1.1.1.267</ecNumber>
    </recommendedName>
    <alternativeName>
        <fullName evidence="1">1-deoxyxylulose-5-phosphate reductoisomerase</fullName>
    </alternativeName>
    <alternativeName>
        <fullName evidence="1">2-C-methyl-D-erythritol 4-phosphate synthase</fullName>
    </alternativeName>
</protein>
<evidence type="ECO:0000255" key="1">
    <source>
        <dbReference type="HAMAP-Rule" id="MF_00183"/>
    </source>
</evidence>
<keyword id="KW-0414">Isoprene biosynthesis</keyword>
<keyword id="KW-0464">Manganese</keyword>
<keyword id="KW-0479">Metal-binding</keyword>
<keyword id="KW-0521">NADP</keyword>
<keyword id="KW-0560">Oxidoreductase</keyword>
<keyword id="KW-1185">Reference proteome</keyword>
<organism>
    <name type="scientific">Persephonella marina (strain DSM 14350 / EX-H1)</name>
    <dbReference type="NCBI Taxonomy" id="123214"/>
    <lineage>
        <taxon>Bacteria</taxon>
        <taxon>Pseudomonadati</taxon>
        <taxon>Aquificota</taxon>
        <taxon>Aquificia</taxon>
        <taxon>Aquificales</taxon>
        <taxon>Hydrogenothermaceae</taxon>
        <taxon>Persephonella</taxon>
    </lineage>
</organism>
<name>DXR_PERMH</name>
<reference key="1">
    <citation type="journal article" date="2009" name="J. Bacteriol.">
        <title>Complete and draft genome sequences of six members of the Aquificales.</title>
        <authorList>
            <person name="Reysenbach A.-L."/>
            <person name="Hamamura N."/>
            <person name="Podar M."/>
            <person name="Griffiths E."/>
            <person name="Ferreira S."/>
            <person name="Hochstein R."/>
            <person name="Heidelberg J."/>
            <person name="Johnson J."/>
            <person name="Mead D."/>
            <person name="Pohorille A."/>
            <person name="Sarmiento M."/>
            <person name="Schweighofer K."/>
            <person name="Seshadri R."/>
            <person name="Voytek M.A."/>
        </authorList>
    </citation>
    <scope>NUCLEOTIDE SEQUENCE [LARGE SCALE GENOMIC DNA]</scope>
    <source>
        <strain>DSM 14350 / EX-H1</strain>
    </source>
</reference>